<organism>
    <name type="scientific">Desulfurococcus amylolyticus (strain DSM 18924 / JCM 16383 / VKM B-2413 / 1221n)</name>
    <name type="common">Desulfurococcus kamchatkensis</name>
    <dbReference type="NCBI Taxonomy" id="490899"/>
    <lineage>
        <taxon>Archaea</taxon>
        <taxon>Thermoproteota</taxon>
        <taxon>Thermoprotei</taxon>
        <taxon>Desulfurococcales</taxon>
        <taxon>Desulfurococcaceae</taxon>
        <taxon>Desulfurococcus</taxon>
    </lineage>
</organism>
<comment type="function">
    <text evidence="1">Catalyzes the GTP-dependent ribosomal translocation step during translation elongation. During this step, the ribosome changes from the pre-translocational (PRE) to the post-translocational (POST) state as the newly formed A-site-bound peptidyl-tRNA and P-site-bound deacylated tRNA move to the P and E sites, respectively. Catalyzes the coordinated movement of the two tRNA molecules, the mRNA and conformational changes in the ribosome.</text>
</comment>
<comment type="subcellular location">
    <subcellularLocation>
        <location evidence="1">Cytoplasm</location>
    </subcellularLocation>
</comment>
<comment type="similarity">
    <text evidence="1">Belongs to the TRAFAC class translation factor GTPase superfamily. Classic translation factor GTPase family. EF-G/EF-2 subfamily.</text>
</comment>
<gene>
    <name evidence="1" type="primary">fusA</name>
    <name type="ordered locus">DKAM_1317</name>
</gene>
<sequence length="736" mass="82748">MVKFKQTSEVLKIMGNIEQIRNIGITAHVDHGKTTLSDTLLSAAGLISEKIAGQALALDYLDVEQKRQMTVKAANASLYHEYKGKPYLINLIDTPGHVDFQSKTIRALRVIDGAIVVVDAVEGVMTQTEMYLRVALEERVRPVLFINKIDRLIKELRLSPTEIQQRLVQIVRDVNTLIATYADKEFQKAWLLDPMKGQVAFGSARDRWGLTIPLVQQKGIKFSDIVDVYTRGKEAVAELQKTAPLHEAILDMVVKHIPNPREAQRYRIPKIWHGDPNHEIVKYLMEADPNGPLVMLINDIRVDPHAGLVATGRIYSGTLRPGEEVWLVNARVPQRVLQVSLYMGPYRELADEITAGNIAAALGLEKARSGETVVSMKYKDTMTPFEKLKMITESVVTVAIEPKNPQQTTKLIDALYKLHLEDPSLIVKINEETGEYLLSGVGTLHIEIALTLLKDLYGLEVVTSPPVIVYRETIRDRSQVFEGKSPNKHNKFYISVTPLNEETLRLLSEGIIMEDMDARERAKILREQAGWDADEARRIMAIDENLNILIDMTTGVQYLREVKDTIIQGFRLAMREGPLAMEPVRGVKVVLHDAVIHEDPAHRGPAQIFPAVRNAIFAGFLTARPTILEPILKLDIRSPMEYIGNISSVITKKRGKLIEVQQMETTARVIAEIPVSESFDIADMLRNVTAGKAIWGQEFSRWAPVPENMLMDLIAKIRTRKGLKPEPPKPEDFLSP</sequence>
<feature type="chain" id="PRO_1000201497" description="Elongation factor 2">
    <location>
        <begin position="1"/>
        <end position="736"/>
    </location>
</feature>
<feature type="domain" description="tr-type G">
    <location>
        <begin position="18"/>
        <end position="261"/>
    </location>
</feature>
<feature type="binding site" evidence="1">
    <location>
        <begin position="27"/>
        <end position="34"/>
    </location>
    <ligand>
        <name>GTP</name>
        <dbReference type="ChEBI" id="CHEBI:37565"/>
    </ligand>
</feature>
<feature type="binding site" evidence="1">
    <location>
        <begin position="93"/>
        <end position="97"/>
    </location>
    <ligand>
        <name>GTP</name>
        <dbReference type="ChEBI" id="CHEBI:37565"/>
    </ligand>
</feature>
<feature type="binding site" evidence="1">
    <location>
        <begin position="147"/>
        <end position="150"/>
    </location>
    <ligand>
        <name>GTP</name>
        <dbReference type="ChEBI" id="CHEBI:37565"/>
    </ligand>
</feature>
<feature type="modified residue" description="Diphthamide" evidence="1">
    <location>
        <position position="602"/>
    </location>
</feature>
<reference key="1">
    <citation type="journal article" date="2009" name="J. Bacteriol.">
        <title>Complete genome sequence of the anaerobic, protein-degrading hyperthermophilic crenarchaeon Desulfurococcus kamchatkensis.</title>
        <authorList>
            <person name="Ravin N.V."/>
            <person name="Mardanov A.V."/>
            <person name="Beletsky A.V."/>
            <person name="Kublanov I.V."/>
            <person name="Kolganova T.V."/>
            <person name="Lebedinsky A.V."/>
            <person name="Chernyh N.A."/>
            <person name="Bonch-Osmolovskaya E.A."/>
            <person name="Skryabin K.G."/>
        </authorList>
    </citation>
    <scope>NUCLEOTIDE SEQUENCE [LARGE SCALE GENOMIC DNA]</scope>
    <source>
        <strain>DSM 18924 / JCM 16383 / VKM B-2413 / 1221n</strain>
    </source>
</reference>
<protein>
    <recommendedName>
        <fullName evidence="1">Elongation factor 2</fullName>
        <shortName evidence="1">EF-2</shortName>
    </recommendedName>
</protein>
<keyword id="KW-0963">Cytoplasm</keyword>
<keyword id="KW-0251">Elongation factor</keyword>
<keyword id="KW-0342">GTP-binding</keyword>
<keyword id="KW-0547">Nucleotide-binding</keyword>
<keyword id="KW-0648">Protein biosynthesis</keyword>
<dbReference type="EMBL" id="CP001140">
    <property type="protein sequence ID" value="ACL11643.1"/>
    <property type="molecule type" value="Genomic_DNA"/>
</dbReference>
<dbReference type="RefSeq" id="WP_012608984.1">
    <property type="nucleotide sequence ID" value="NC_011766.1"/>
</dbReference>
<dbReference type="SMR" id="B8D6B2"/>
<dbReference type="STRING" id="490899.DKAM_1317"/>
<dbReference type="GeneID" id="7171371"/>
<dbReference type="KEGG" id="dka:DKAM_1317"/>
<dbReference type="eggNOG" id="arCOG01559">
    <property type="taxonomic scope" value="Archaea"/>
</dbReference>
<dbReference type="HOGENOM" id="CLU_002794_11_1_2"/>
<dbReference type="Proteomes" id="UP000006903">
    <property type="component" value="Chromosome"/>
</dbReference>
<dbReference type="GO" id="GO:0005829">
    <property type="term" value="C:cytosol"/>
    <property type="evidence" value="ECO:0007669"/>
    <property type="project" value="TreeGrafter"/>
</dbReference>
<dbReference type="GO" id="GO:1990904">
    <property type="term" value="C:ribonucleoprotein complex"/>
    <property type="evidence" value="ECO:0007669"/>
    <property type="project" value="TreeGrafter"/>
</dbReference>
<dbReference type="GO" id="GO:0005525">
    <property type="term" value="F:GTP binding"/>
    <property type="evidence" value="ECO:0007669"/>
    <property type="project" value="UniProtKB-UniRule"/>
</dbReference>
<dbReference type="GO" id="GO:0003924">
    <property type="term" value="F:GTPase activity"/>
    <property type="evidence" value="ECO:0007669"/>
    <property type="project" value="InterPro"/>
</dbReference>
<dbReference type="GO" id="GO:0003746">
    <property type="term" value="F:translation elongation factor activity"/>
    <property type="evidence" value="ECO:0007669"/>
    <property type="project" value="UniProtKB-UniRule"/>
</dbReference>
<dbReference type="CDD" id="cd01681">
    <property type="entry name" value="aeEF2_snRNP_like_IV"/>
    <property type="match status" value="1"/>
</dbReference>
<dbReference type="CDD" id="cd01885">
    <property type="entry name" value="EF2"/>
    <property type="match status" value="1"/>
</dbReference>
<dbReference type="CDD" id="cd16268">
    <property type="entry name" value="EF2_II"/>
    <property type="match status" value="1"/>
</dbReference>
<dbReference type="CDD" id="cd01514">
    <property type="entry name" value="Elongation_Factor_C"/>
    <property type="match status" value="1"/>
</dbReference>
<dbReference type="FunFam" id="3.30.230.10:FF:000009">
    <property type="entry name" value="116 kDa U5 small nuclear ribonucleoprotein component"/>
    <property type="match status" value="1"/>
</dbReference>
<dbReference type="FunFam" id="3.30.70.870:FF:000002">
    <property type="entry name" value="Translation elongation factor 2"/>
    <property type="match status" value="1"/>
</dbReference>
<dbReference type="Gene3D" id="3.30.230.10">
    <property type="match status" value="1"/>
</dbReference>
<dbReference type="Gene3D" id="3.30.70.240">
    <property type="match status" value="1"/>
</dbReference>
<dbReference type="Gene3D" id="3.30.70.870">
    <property type="entry name" value="Elongation Factor G (Translational Gtpase), domain 3"/>
    <property type="match status" value="1"/>
</dbReference>
<dbReference type="Gene3D" id="3.40.50.300">
    <property type="entry name" value="P-loop containing nucleotide triphosphate hydrolases"/>
    <property type="match status" value="1"/>
</dbReference>
<dbReference type="Gene3D" id="2.40.30.10">
    <property type="entry name" value="Translation factors"/>
    <property type="match status" value="1"/>
</dbReference>
<dbReference type="HAMAP" id="MF_00054_A">
    <property type="entry name" value="EF_G_EF_2_A"/>
    <property type="match status" value="1"/>
</dbReference>
<dbReference type="InterPro" id="IPR041095">
    <property type="entry name" value="EFG_II"/>
</dbReference>
<dbReference type="InterPro" id="IPR035647">
    <property type="entry name" value="EFG_III/V"/>
</dbReference>
<dbReference type="InterPro" id="IPR000640">
    <property type="entry name" value="EFG_V-like"/>
</dbReference>
<dbReference type="InterPro" id="IPR004161">
    <property type="entry name" value="EFTu-like_2"/>
</dbReference>
<dbReference type="InterPro" id="IPR027417">
    <property type="entry name" value="P-loop_NTPase"/>
</dbReference>
<dbReference type="InterPro" id="IPR020568">
    <property type="entry name" value="Ribosomal_Su5_D2-typ_SF"/>
</dbReference>
<dbReference type="InterPro" id="IPR014721">
    <property type="entry name" value="Ribsml_uS5_D2-typ_fold_subgr"/>
</dbReference>
<dbReference type="InterPro" id="IPR005225">
    <property type="entry name" value="Small_GTP-bd"/>
</dbReference>
<dbReference type="InterPro" id="IPR000795">
    <property type="entry name" value="T_Tr_GTP-bd_dom"/>
</dbReference>
<dbReference type="InterPro" id="IPR009000">
    <property type="entry name" value="Transl_B-barrel_sf"/>
</dbReference>
<dbReference type="InterPro" id="IPR004543">
    <property type="entry name" value="Transl_elong_EFG/EF2_arc"/>
</dbReference>
<dbReference type="InterPro" id="IPR005517">
    <property type="entry name" value="Transl_elong_EFG/EF2_IV"/>
</dbReference>
<dbReference type="NCBIfam" id="TIGR00490">
    <property type="entry name" value="aEF-2"/>
    <property type="match status" value="1"/>
</dbReference>
<dbReference type="NCBIfam" id="TIGR00231">
    <property type="entry name" value="small_GTP"/>
    <property type="match status" value="1"/>
</dbReference>
<dbReference type="PANTHER" id="PTHR42908:SF3">
    <property type="entry name" value="ELONGATION FACTOR-LIKE GTPASE 1"/>
    <property type="match status" value="1"/>
</dbReference>
<dbReference type="PANTHER" id="PTHR42908">
    <property type="entry name" value="TRANSLATION ELONGATION FACTOR-RELATED"/>
    <property type="match status" value="1"/>
</dbReference>
<dbReference type="Pfam" id="PF00679">
    <property type="entry name" value="EFG_C"/>
    <property type="match status" value="1"/>
</dbReference>
<dbReference type="Pfam" id="PF14492">
    <property type="entry name" value="EFG_III"/>
    <property type="match status" value="1"/>
</dbReference>
<dbReference type="Pfam" id="PF03764">
    <property type="entry name" value="EFG_IV"/>
    <property type="match status" value="1"/>
</dbReference>
<dbReference type="Pfam" id="PF00009">
    <property type="entry name" value="GTP_EFTU"/>
    <property type="match status" value="1"/>
</dbReference>
<dbReference type="Pfam" id="PF03144">
    <property type="entry name" value="GTP_EFTU_D2"/>
    <property type="match status" value="1"/>
</dbReference>
<dbReference type="PRINTS" id="PR00315">
    <property type="entry name" value="ELONGATNFCT"/>
</dbReference>
<dbReference type="SMART" id="SM00838">
    <property type="entry name" value="EFG_C"/>
    <property type="match status" value="1"/>
</dbReference>
<dbReference type="SMART" id="SM00889">
    <property type="entry name" value="EFG_IV"/>
    <property type="match status" value="1"/>
</dbReference>
<dbReference type="SUPFAM" id="SSF54980">
    <property type="entry name" value="EF-G C-terminal domain-like"/>
    <property type="match status" value="2"/>
</dbReference>
<dbReference type="SUPFAM" id="SSF52540">
    <property type="entry name" value="P-loop containing nucleoside triphosphate hydrolases"/>
    <property type="match status" value="1"/>
</dbReference>
<dbReference type="SUPFAM" id="SSF54211">
    <property type="entry name" value="Ribosomal protein S5 domain 2-like"/>
    <property type="match status" value="1"/>
</dbReference>
<dbReference type="SUPFAM" id="SSF50447">
    <property type="entry name" value="Translation proteins"/>
    <property type="match status" value="1"/>
</dbReference>
<dbReference type="PROSITE" id="PS51722">
    <property type="entry name" value="G_TR_2"/>
    <property type="match status" value="1"/>
</dbReference>
<name>EF2_DESA1</name>
<accession>B8D6B2</accession>
<proteinExistence type="inferred from homology"/>
<evidence type="ECO:0000255" key="1">
    <source>
        <dbReference type="HAMAP-Rule" id="MF_00054"/>
    </source>
</evidence>